<proteinExistence type="inferred from homology"/>
<protein>
    <recommendedName>
        <fullName evidence="1">Translation initiation factor 2 subunit beta</fullName>
    </recommendedName>
    <alternativeName>
        <fullName evidence="1">aIF2-beta</fullName>
    </alternativeName>
    <alternativeName>
        <fullName evidence="1">eIF-2-beta</fullName>
    </alternativeName>
</protein>
<feature type="chain" id="PRO_1000021648" description="Translation initiation factor 2 subunit beta">
    <location>
        <begin position="1"/>
        <end position="204"/>
    </location>
</feature>
<feature type="domain" description="TRAM" evidence="1">
    <location>
        <begin position="146"/>
        <end position="204"/>
    </location>
</feature>
<organism>
    <name type="scientific">Methanoregula boonei (strain DSM 21154 / JCM 14090 / 6A8)</name>
    <dbReference type="NCBI Taxonomy" id="456442"/>
    <lineage>
        <taxon>Archaea</taxon>
        <taxon>Methanobacteriati</taxon>
        <taxon>Methanobacteriota</taxon>
        <taxon>Stenosarchaea group</taxon>
        <taxon>Methanomicrobia</taxon>
        <taxon>Methanomicrobiales</taxon>
        <taxon>Methanoregulaceae</taxon>
        <taxon>Methanoregula</taxon>
    </lineage>
</organism>
<accession>A7I5J0</accession>
<name>IF2B_METB6</name>
<sequence>MTDSYENLLKKAYSHISEKSASSERFVVPEAKAYVEGKTTILENFAEIADTVRRDKDHLMKYMLGELGTSGKIEGNRAIFNGKFEISQIRMIIKSYVDDYVICSECGKPDTRLVKDDRVLLLRCDACGGHRPVRKRKARTEPASENLEEGQVLDVEIQSLSKRGDGVVKMGRYIMYVSNAKPGQSVKIKISRISGSIVFTERAE</sequence>
<reference key="1">
    <citation type="journal article" date="2015" name="Microbiology">
        <title>Genome of Methanoregula boonei 6A8 reveals adaptations to oligotrophic peatland environments.</title>
        <authorList>
            <person name="Braeuer S."/>
            <person name="Cadillo-Quiroz H."/>
            <person name="Kyrpides N."/>
            <person name="Woyke T."/>
            <person name="Goodwin L."/>
            <person name="Detter C."/>
            <person name="Podell S."/>
            <person name="Yavitt J.B."/>
            <person name="Zinder S.H."/>
        </authorList>
    </citation>
    <scope>NUCLEOTIDE SEQUENCE [LARGE SCALE GENOMIC DNA]</scope>
    <source>
        <strain>DSM 21154 / JCM 14090 / 6A8</strain>
    </source>
</reference>
<comment type="function">
    <text evidence="1">eIF-2 functions in the early steps of protein synthesis by forming a ternary complex with GTP and initiator tRNA.</text>
</comment>
<comment type="subunit">
    <text evidence="1">Heterotrimer composed of an alpha, a beta and a gamma chain.</text>
</comment>
<comment type="similarity">
    <text evidence="1">Belongs to the eIF-2-beta/eIF-5 family.</text>
</comment>
<gene>
    <name evidence="1" type="primary">eif2b</name>
    <name type="ordered locus">Mboo_0483</name>
</gene>
<dbReference type="EMBL" id="CP000780">
    <property type="protein sequence ID" value="ABS55001.1"/>
    <property type="molecule type" value="Genomic_DNA"/>
</dbReference>
<dbReference type="RefSeq" id="WP_012106020.1">
    <property type="nucleotide sequence ID" value="NC_009712.1"/>
</dbReference>
<dbReference type="SMR" id="A7I5J0"/>
<dbReference type="STRING" id="456442.Mboo_0483"/>
<dbReference type="GeneID" id="5410168"/>
<dbReference type="KEGG" id="mbn:Mboo_0483"/>
<dbReference type="eggNOG" id="arCOG01640">
    <property type="taxonomic scope" value="Archaea"/>
</dbReference>
<dbReference type="HOGENOM" id="CLU_026663_3_0_2"/>
<dbReference type="OrthoDB" id="38099at2157"/>
<dbReference type="Proteomes" id="UP000002408">
    <property type="component" value="Chromosome"/>
</dbReference>
<dbReference type="GO" id="GO:0003743">
    <property type="term" value="F:translation initiation factor activity"/>
    <property type="evidence" value="ECO:0007669"/>
    <property type="project" value="UniProtKB-UniRule"/>
</dbReference>
<dbReference type="FunFam" id="3.30.30.170:FF:000001">
    <property type="entry name" value="Eukaryotic translation initiation factor 2 subunit"/>
    <property type="match status" value="1"/>
</dbReference>
<dbReference type="Gene3D" id="3.30.30.170">
    <property type="match status" value="1"/>
</dbReference>
<dbReference type="Gene3D" id="2.40.50.140">
    <property type="entry name" value="Nucleic acid-binding proteins"/>
    <property type="match status" value="1"/>
</dbReference>
<dbReference type="HAMAP" id="MF_00232">
    <property type="entry name" value="eIF_2_beta"/>
    <property type="match status" value="1"/>
</dbReference>
<dbReference type="InterPro" id="IPR045196">
    <property type="entry name" value="IF2/IF5"/>
</dbReference>
<dbReference type="InterPro" id="IPR012340">
    <property type="entry name" value="NA-bd_OB-fold"/>
</dbReference>
<dbReference type="InterPro" id="IPR004458">
    <property type="entry name" value="TIF2_bsu_arc"/>
</dbReference>
<dbReference type="InterPro" id="IPR002792">
    <property type="entry name" value="TRAM_dom"/>
</dbReference>
<dbReference type="InterPro" id="IPR002735">
    <property type="entry name" value="Transl_init_fac_IF2/IF5_dom"/>
</dbReference>
<dbReference type="InterPro" id="IPR016189">
    <property type="entry name" value="Transl_init_fac_IF2/IF5_N"/>
</dbReference>
<dbReference type="InterPro" id="IPR016190">
    <property type="entry name" value="Transl_init_fac_IF2/IF5_Zn-bd"/>
</dbReference>
<dbReference type="NCBIfam" id="TIGR00311">
    <property type="entry name" value="aIF-2beta"/>
    <property type="match status" value="1"/>
</dbReference>
<dbReference type="NCBIfam" id="NF003067">
    <property type="entry name" value="PRK03988.1"/>
    <property type="match status" value="1"/>
</dbReference>
<dbReference type="NCBIfam" id="NF008993">
    <property type="entry name" value="PRK12336.1"/>
    <property type="match status" value="1"/>
</dbReference>
<dbReference type="PANTHER" id="PTHR23001">
    <property type="entry name" value="EUKARYOTIC TRANSLATION INITIATION FACTOR"/>
    <property type="match status" value="1"/>
</dbReference>
<dbReference type="PANTHER" id="PTHR23001:SF3">
    <property type="entry name" value="EUKARYOTIC TRANSLATION INITIATION FACTOR 2 SUBUNIT 2"/>
    <property type="match status" value="1"/>
</dbReference>
<dbReference type="Pfam" id="PF01873">
    <property type="entry name" value="eIF-5_eIF-2B"/>
    <property type="match status" value="1"/>
</dbReference>
<dbReference type="Pfam" id="PF01938">
    <property type="entry name" value="TRAM"/>
    <property type="match status" value="1"/>
</dbReference>
<dbReference type="SMART" id="SM00653">
    <property type="entry name" value="eIF2B_5"/>
    <property type="match status" value="1"/>
</dbReference>
<dbReference type="SUPFAM" id="SSF50249">
    <property type="entry name" value="Nucleic acid-binding proteins"/>
    <property type="match status" value="1"/>
</dbReference>
<dbReference type="SUPFAM" id="SSF100966">
    <property type="entry name" value="Translation initiation factor 2 beta, aIF2beta, N-terminal domain"/>
    <property type="match status" value="1"/>
</dbReference>
<dbReference type="SUPFAM" id="SSF75689">
    <property type="entry name" value="Zinc-binding domain of translation initiation factor 2 beta"/>
    <property type="match status" value="1"/>
</dbReference>
<dbReference type="PROSITE" id="PS50926">
    <property type="entry name" value="TRAM"/>
    <property type="match status" value="1"/>
</dbReference>
<evidence type="ECO:0000255" key="1">
    <source>
        <dbReference type="HAMAP-Rule" id="MF_00232"/>
    </source>
</evidence>
<keyword id="KW-0396">Initiation factor</keyword>
<keyword id="KW-0648">Protein biosynthesis</keyword>
<keyword id="KW-1185">Reference proteome</keyword>